<sequence length="68" mass="7665">MKTQIVILIVAVLVLQLVSQSDAFLQGIIDTVGKWLGKRGLKNLDQYNDLFDGEISDADIKFLQDLMR</sequence>
<protein>
    <recommendedName>
        <fullName evidence="3">Antimicrobial peptide VpCT3</fullName>
    </recommendedName>
</protein>
<accession>P0DRH5</accession>
<evidence type="ECO:0000255" key="1"/>
<evidence type="ECO:0000269" key="2">
    <source>
    </source>
</evidence>
<evidence type="ECO:0000303" key="3">
    <source>
    </source>
</evidence>
<evidence type="ECO:0000305" key="4"/>
<evidence type="ECO:0000305" key="5">
    <source>
    </source>
</evidence>
<organism>
    <name type="scientific">Mesomexovis punctatus</name>
    <name type="common">Scorpion</name>
    <name type="synonym">Vaejovis punctatus</name>
    <dbReference type="NCBI Taxonomy" id="1532993"/>
    <lineage>
        <taxon>Eukaryota</taxon>
        <taxon>Metazoa</taxon>
        <taxon>Ecdysozoa</taxon>
        <taxon>Arthropoda</taxon>
        <taxon>Chelicerata</taxon>
        <taxon>Arachnida</taxon>
        <taxon>Scorpiones</taxon>
        <taxon>Iurida</taxon>
        <taxon>Chactoidea</taxon>
        <taxon>Vaejovidae</taxon>
        <taxon>Mesomexovis</taxon>
    </lineage>
</organism>
<proteinExistence type="evidence at protein level"/>
<keyword id="KW-0027">Amidation</keyword>
<keyword id="KW-0044">Antibiotic</keyword>
<keyword id="KW-0929">Antimicrobial</keyword>
<keyword id="KW-0165">Cleavage on pair of basic residues</keyword>
<keyword id="KW-0204">Cytolysis</keyword>
<keyword id="KW-0295">Fungicide</keyword>
<keyword id="KW-0472">Membrane</keyword>
<keyword id="KW-0964">Secreted</keyword>
<keyword id="KW-0732">Signal</keyword>
<keyword id="KW-1052">Target cell membrane</keyword>
<keyword id="KW-1053">Target membrane</keyword>
<feature type="signal peptide" evidence="1">
    <location>
        <begin position="1"/>
        <end position="23"/>
    </location>
</feature>
<feature type="peptide" id="PRO_0000461840" description="Antimicrobial peptide VpCT3" evidence="5">
    <location>
        <begin position="24"/>
        <end position="36"/>
    </location>
</feature>
<feature type="propeptide" id="PRO_0000461841" evidence="5">
    <location>
        <begin position="37"/>
        <end position="68"/>
    </location>
</feature>
<feature type="modified residue" description="Leucine amide" evidence="5">
    <location>
        <position position="36"/>
    </location>
</feature>
<feature type="mutagenesis site" description="In VpCT3W: Slight decrease in antimicrobial activity against bacteria and yeasts. Increase in cytolytic activity." evidence="2">
    <original>I</original>
    <variation>W</variation>
    <location>
        <position position="29"/>
    </location>
</feature>
<reference key="1">
    <citation type="journal article" date="2015" name="PLoS ONE">
        <title>Transcriptome analysis of scorpion species belonging to the Vaejovis genus.</title>
        <authorList>
            <person name="Quintero-Hernandez V."/>
            <person name="Ramirez-Carreto S."/>
            <person name="Romero-Gutierrez M.T."/>
            <person name="Valdez-Velazquez L.L."/>
            <person name="Becerril B."/>
            <person name="Possani L.D."/>
            <person name="Ortiz E."/>
        </authorList>
    </citation>
    <scope>NUCLEOTIDE SEQUENCE [MRNA]</scope>
    <scope>PROBABLE AMIDATION AT LEU-36</scope>
    <source>
        <tissue>Venom gland</tissue>
    </source>
</reference>
<reference key="2">
    <citation type="journal article" date="2021" name="Peptides">
        <title>Structural and functional characterization of NDBP-4 family antimicrobial peptides from the scorpion Mesomexovis variegatus.</title>
        <authorList>
            <person name="Jimenez-Vargas J.M."/>
            <person name="Ramirez-Carreto S."/>
            <person name="Corzo G."/>
            <person name="Possani L.D."/>
            <person name="Becerril B."/>
            <person name="Ortiz E."/>
        </authorList>
    </citation>
    <scope>FUNCTION</scope>
    <scope>SYNTHESIS OF 24-36</scope>
    <scope>MUTAGENESIS OF ILE-29</scope>
</reference>
<name>NDBT3_MESPU</name>
<comment type="function">
    <text evidence="2">Antimicrobial peptide with weak activity against all bacteria tested (MIC&gt;100 uM) and all yeasts tested (MIC&gt;200 uM). Also provokes weak hemolysis on human erythrocytes (HC(50)=83.7 uM).</text>
</comment>
<comment type="subcellular location">
    <subcellularLocation>
        <location evidence="5">Secreted</location>
    </subcellularLocation>
    <subcellularLocation>
        <location evidence="5">Target cell membrane</location>
    </subcellularLocation>
</comment>
<comment type="tissue specificity">
    <text evidence="5">Expressed by the venom gland.</text>
</comment>
<comment type="similarity">
    <text evidence="4">Belongs to the non-disulfide-bridged peptide (NDBP) superfamily. Short antimicrobial peptide (group 4) family.</text>
</comment>
<comment type="caution">
    <text evidence="4">Jimenez-Vargas et al. (2021) report this protein originates from Mesomexovis variegatus, while Quintero-Hernandez et al. (2015) sequenced it from Vaejovis punctatus. This discrepancy may stem from taxonomic history: V.punctatus was previously classified as V.punctatus variegatus Pocock, 1898. It should be noted that Mesomexovis variegatus and Mesomexovis punctatus represent two distinct species.</text>
</comment>
<dbReference type="EMBL" id="JZ818434">
    <property type="status" value="NOT_ANNOTATED_CDS"/>
    <property type="molecule type" value="mRNA"/>
</dbReference>
<dbReference type="GO" id="GO:0005576">
    <property type="term" value="C:extracellular region"/>
    <property type="evidence" value="ECO:0007669"/>
    <property type="project" value="UniProtKB-SubCell"/>
</dbReference>
<dbReference type="GO" id="GO:0016020">
    <property type="term" value="C:membrane"/>
    <property type="evidence" value="ECO:0007669"/>
    <property type="project" value="UniProtKB-KW"/>
</dbReference>
<dbReference type="GO" id="GO:0044218">
    <property type="term" value="C:other organism cell membrane"/>
    <property type="evidence" value="ECO:0007669"/>
    <property type="project" value="UniProtKB-KW"/>
</dbReference>
<dbReference type="GO" id="GO:0042742">
    <property type="term" value="P:defense response to bacterium"/>
    <property type="evidence" value="ECO:0007669"/>
    <property type="project" value="UniProtKB-KW"/>
</dbReference>
<dbReference type="GO" id="GO:0050832">
    <property type="term" value="P:defense response to fungus"/>
    <property type="evidence" value="ECO:0007669"/>
    <property type="project" value="UniProtKB-KW"/>
</dbReference>
<dbReference type="GO" id="GO:0031640">
    <property type="term" value="P:killing of cells of another organism"/>
    <property type="evidence" value="ECO:0007669"/>
    <property type="project" value="UniProtKB-KW"/>
</dbReference>